<reference key="1">
    <citation type="journal article" date="2005" name="Genetics">
        <title>Gene clusters for insecticidal loline alkaloids in the grass-endophytic fungus Neotyphodium uncinatum.</title>
        <authorList>
            <person name="Spiering M.J."/>
            <person name="Moon C.D."/>
            <person name="Wilkinson H.H."/>
            <person name="Schardl C.L."/>
        </authorList>
    </citation>
    <scope>NUCLEOTIDE SEQUENCE [GENOMIC DNA]</scope>
    <scope>INDUCTION</scope>
    <scope>FUNCTION</scope>
    <source>
        <strain>CBS 102646</strain>
    </source>
</reference>
<reference key="2">
    <citation type="journal article" date="2005" name="ChemBioChem">
        <title>Biosynthetic precursors of fungal pyrrolizidines, the loline alkaloids.</title>
        <authorList>
            <person name="Blankenship J.D."/>
            <person name="Houseknecht J.B."/>
            <person name="Pal S."/>
            <person name="Bush L.P."/>
            <person name="Grossman R.B."/>
            <person name="Schardl C.L."/>
        </authorList>
    </citation>
    <scope>FUNCTION</scope>
</reference>
<reference key="3">
    <citation type="journal article" date="2006" name="ChemBioChem">
        <title>On the sequence of bond formation in loline alkaloid biosynthesis.</title>
        <authorList>
            <person name="Faulkner J.R."/>
            <person name="Hussaini S.R."/>
            <person name="Blankenship J.D."/>
            <person name="Pal S."/>
            <person name="Branan B.M."/>
            <person name="Grossman R.B."/>
            <person name="Schardl C.L."/>
        </authorList>
    </citation>
    <scope>FUNCTION</scope>
</reference>
<reference key="4">
    <citation type="journal article" date="2008" name="Fungal Genet. Biol.">
        <title>Role of the LolP cytochrome P450 monooxygenase in loline alkaloid biosynthesis.</title>
        <authorList>
            <person name="Spiering M.J."/>
            <person name="Faulkner J.R."/>
            <person name="Zhang D.X."/>
            <person name="Machado C."/>
            <person name="Grossman R.B."/>
            <person name="Schardl C.L."/>
        </authorList>
    </citation>
    <scope>FUNCTION</scope>
    <source>
        <strain>CBS 102646</strain>
    </source>
</reference>
<reference key="5">
    <citation type="journal article" date="2014" name="Phytochemistry">
        <title>Ether bridge formation in loline alkaloid biosynthesis.</title>
        <authorList>
            <person name="Pan J."/>
            <person name="Bhardwaj M."/>
            <person name="Faulkner J.R."/>
            <person name="Nagabhyru P."/>
            <person name="Charlton N.D."/>
            <person name="Higashi R.M."/>
            <person name="Miller A.F."/>
            <person name="Young C.A."/>
            <person name="Grossman R.B."/>
            <person name="Schardl C.L."/>
        </authorList>
    </citation>
    <scope>FUNCTION</scope>
</reference>
<reference key="6">
    <citation type="journal article" date="2014" name="PLoS ONE">
        <title>Enzymes from fungal and plant origin required for chemical diversification of insecticidal loline alkaloids in grass-Epichloe symbiota.</title>
        <authorList>
            <person name="Pan J."/>
            <person name="Bhardwaj M."/>
            <person name="Nagabhyru P."/>
            <person name="Grossman R.B."/>
            <person name="Schardl C.L."/>
        </authorList>
    </citation>
    <scope>FUNCTION</scope>
    <scope>BIOTECHNOLOGY</scope>
</reference>
<reference key="7">
    <citation type="journal article" date="2018" name="Biochemistry">
        <title>Installation of the ether bridge of lolines by the iron- and 2-oxoglutarate-dependent oxygenase, lolO: regio- and stereochemistry of sequential hydroxylation and oxacyclization reactions.</title>
        <authorList>
            <person name="Pan J."/>
            <person name="Bhardwaj M."/>
            <person name="Zhang B."/>
            <person name="Chang W.C."/>
            <person name="Schardl C.L."/>
            <person name="Krebs C."/>
            <person name="Grossman R.B."/>
            <person name="Bollinger J.M. Jr."/>
        </authorList>
    </citation>
    <scope>FUNCTION</scope>
</reference>
<keyword id="KW-0017">Alkaloid metabolism</keyword>
<keyword id="KW-0456">Lyase</keyword>
<keyword id="KW-0663">Pyridoxal phosphate</keyword>
<protein>
    <recommendedName>
        <fullName evidence="9">L-cysteine desulfhydrase-like protein lolT1</fullName>
        <ecNumber evidence="11">4.4.1.-</ecNumber>
    </recommendedName>
    <alternativeName>
        <fullName evidence="9">Loline biosynthesis cluster 1 protein T</fullName>
    </alternativeName>
</protein>
<name>LOLT1_EPIUN</name>
<sequence length="454" mass="50486">MTVNSKRIPFGKPMLEAFCMDPEYTNLNSSSCGSWPKVVSKQIRDYWSLLEAQPDLFSEFSQGLVLQEARIGLAHLVHAAVSECVLVSNVTTGIFTVLYNQAFEERDVVVTLSTTYGAIDHGITSLAETRPFKTRRVEFELPTTGQKIVSQFETAMAQIRADGLRPRLAILETIVSIPAVRMPFEDLLRVCQKEGIMTLVDGAHSVGQFEVNLQELQPDFFVSDCHKWLFVPRPCAVLYVAERNQHMMRSVIPTSFGFIPKNGNSRLPLWSQMVSASETASSFETLFAYTATSDYMPHLCIPAALRFRRDVCGGEAAIYEYIKWLAKEGGDKIADILQTEVLEEPGLGAGVDGQMRNCGIVTVRLPLAIATGPSTAPAHVPGGALTEKEVGPAVRYLTKALAERYKTWIPIIDYRGWIWARLCAQVYLEVSDFEMAGNSLKVICEEILNREMGQ</sequence>
<evidence type="ECO:0000250" key="1"/>
<evidence type="ECO:0000269" key="2">
    <source>
    </source>
</evidence>
<evidence type="ECO:0000269" key="3">
    <source>
    </source>
</evidence>
<evidence type="ECO:0000269" key="4">
    <source>
    </source>
</evidence>
<evidence type="ECO:0000269" key="5">
    <source>
    </source>
</evidence>
<evidence type="ECO:0000269" key="6">
    <source>
    </source>
</evidence>
<evidence type="ECO:0000269" key="7">
    <source>
    </source>
</evidence>
<evidence type="ECO:0000269" key="8">
    <source>
    </source>
</evidence>
<evidence type="ECO:0000303" key="9">
    <source>
    </source>
</evidence>
<evidence type="ECO:0000305" key="10"/>
<evidence type="ECO:0000305" key="11">
    <source>
    </source>
</evidence>
<evidence type="ECO:0000305" key="12">
    <source>
    </source>
</evidence>
<accession>Q5MNI0</accession>
<comment type="function">
    <text evidence="2 3 4 5 6 7 8">L-cysteine desulfhydrase-like protein; part of the gene cluster that mediates the biosynthesis of loline alkaloids, potent insecticidal agents composed of a pyrrolizidine ring system and an uncommon ether bridge linking carbons 2 and 7 (PubMed:15654104). Lolines are structurally differentiated by the various modifications of the L-amino group and include norloline, loline, N-methylloline, N-acetylloline, N-acetylnorloline, and N-formylloline (PubMed:15861432, PubMed:25531527). The first committed step is the condensation of O-acetyl-L-homoserine (derived from L-aspartic acid) and L-proline, probably catalyzed by the gamma-type pyridoxal 5'-phosphate(PLP)-dependent enzyme lolC, to give the diamino diacid, NACPP (PubMed:15861432, PubMed:16755627). Ensuing cyclization, decarboxylation, and acetylation steps yield 1-exo-acetamidopyrrolizidine (AcAP) (PubMed:24374065). LolO is required for installation of the ether bridge upon the pathway intermediate, 1-exo-acetamidopyrrolizidine (AcAP) (PubMed:29537853). In sequential 2-oxoglutarate- and O(2)-consuming steps, lolO removes hydrogens from C2 and C7 of AcAP to form both carbon-oxygen bonds in N-acetylnorloline (NANL), the precursor to all other lolines (PubMed:24374065, PubMed:29537853). The enzymes lolD, lolE, lolF and lolT have also been proposed to be involved in the ether-bridge installation (PubMed:15654104). Further processing of the exocyclic moiety of NANL by fungal N-acetamidase (LolN), methyltransferase (LolM), and cytochrome P450 (LolP) enzymes, with occasional involvement of a plant acetyltransferase, generates the other known lolines (PubMed:18655839, PubMed:25531527). LolN transforms NANL to norlonine which is monomethylated and dimethylated to respectively lonine and N-methyllonine (NML) by lolM (PubMed:25531527). LolP catalyzes hydroxylation of the methyl group in N-methylloline (NML) and further oxygenation to N-formylloline (NFL) (PubMed:18655839). A plant acetyltransferase is responsible for the acetylation of loline to form N-acetylloline (NAL) (PubMed:25531527). LolA might interact with aspartate kinase to prevent feedback inhibition of its activity by these end products and thereby promote production of L-homoserine from L-aspartate (PubMed:15654104).</text>
</comment>
<comment type="cofactor">
    <cofactor evidence="1">
        <name>pyridoxal 5'-phosphate</name>
        <dbReference type="ChEBI" id="CHEBI:597326"/>
    </cofactor>
</comment>
<comment type="pathway">
    <text evidence="2">Alkaloid biosynthesis.</text>
</comment>
<comment type="induction">
    <text evidence="2">Expression is induced in loline alkaloid-producing cultures as well as in planta (PubMed:15654104).</text>
</comment>
<comment type="biotechnology">
    <text evidence="12">Loline alkaloids show broad-spectrum anti-insect activity, and different lolines may have different biological activities (PubMed:25531527). In vitro tests of NFL, NAL, NML, and semisynthetic loline derivatives with long carbon-chain acylations on the 1-amine have shown that many are effective against both fall armyworm larvae and European corn borer larvae, but the effects seem to differ depending on the modifications (PubMed:25531527). N-Formylloline reduces the weight gain of fall armyworms by deterring feeding, and does not significantly affect corn borers (PubMed:25531527). In contrast, NAL reduces the weight gain of corn borer larvae without changing larval feeding behavior, indicating that its effect is due to metabolic toxicity. N-formylloline, NAL, and NML are almost as potent as nicotine in insecticidal activity against green bugs (PubMed:25531527).</text>
</comment>
<comment type="similarity">
    <text evidence="10">Belongs to the class-V pyridoxal-phosphate-dependent aminotransferase family.</text>
</comment>
<proteinExistence type="evidence at transcript level"/>
<gene>
    <name evidence="9" type="primary">lolT1</name>
    <name evidence="9" type="synonym">lolT</name>
</gene>
<feature type="chain" id="PRO_0000444365" description="L-cysteine desulfhydrase-like protein lolT1">
    <location>
        <begin position="1"/>
        <end position="454"/>
    </location>
</feature>
<feature type="modified residue" description="N6-(pyridoxal phosphate)lysine" evidence="1">
    <location>
        <position position="227"/>
    </location>
</feature>
<organism>
    <name type="scientific">Epichloe uncinata</name>
    <name type="common">Endophyte fungus</name>
    <name type="synonym">Neotyphodium uncinatum</name>
    <dbReference type="NCBI Taxonomy" id="5050"/>
    <lineage>
        <taxon>Eukaryota</taxon>
        <taxon>Fungi</taxon>
        <taxon>Dikarya</taxon>
        <taxon>Ascomycota</taxon>
        <taxon>Pezizomycotina</taxon>
        <taxon>Sordariomycetes</taxon>
        <taxon>Hypocreomycetidae</taxon>
        <taxon>Hypocreales</taxon>
        <taxon>Clavicipitaceae</taxon>
        <taxon>Epichloe</taxon>
    </lineage>
</organism>
<dbReference type="EC" id="4.4.1.-" evidence="11"/>
<dbReference type="EMBL" id="AY723749">
    <property type="protein sequence ID" value="AAV68709.1"/>
    <property type="molecule type" value="Genomic_DNA"/>
</dbReference>
<dbReference type="SMR" id="Q5MNI0"/>
<dbReference type="GO" id="GO:0016829">
    <property type="term" value="F:lyase activity"/>
    <property type="evidence" value="ECO:0007669"/>
    <property type="project" value="UniProtKB-KW"/>
</dbReference>
<dbReference type="GO" id="GO:0009820">
    <property type="term" value="P:alkaloid metabolic process"/>
    <property type="evidence" value="ECO:0007669"/>
    <property type="project" value="UniProtKB-KW"/>
</dbReference>
<dbReference type="Gene3D" id="3.90.1150.10">
    <property type="entry name" value="Aspartate Aminotransferase, domain 1"/>
    <property type="match status" value="1"/>
</dbReference>
<dbReference type="Gene3D" id="3.40.640.10">
    <property type="entry name" value="Type I PLP-dependent aspartate aminotransferase-like (Major domain)"/>
    <property type="match status" value="1"/>
</dbReference>
<dbReference type="InterPro" id="IPR000192">
    <property type="entry name" value="Aminotrans_V_dom"/>
</dbReference>
<dbReference type="InterPro" id="IPR015424">
    <property type="entry name" value="PyrdxlP-dep_Trfase"/>
</dbReference>
<dbReference type="InterPro" id="IPR015421">
    <property type="entry name" value="PyrdxlP-dep_Trfase_major"/>
</dbReference>
<dbReference type="InterPro" id="IPR015422">
    <property type="entry name" value="PyrdxlP-dep_Trfase_small"/>
</dbReference>
<dbReference type="PANTHER" id="PTHR43092:SF2">
    <property type="entry name" value="HERCYNYLCYSTEINE SULFOXIDE LYASE"/>
    <property type="match status" value="1"/>
</dbReference>
<dbReference type="PANTHER" id="PTHR43092">
    <property type="entry name" value="L-CYSTEINE DESULFHYDRASE"/>
    <property type="match status" value="1"/>
</dbReference>
<dbReference type="Pfam" id="PF00266">
    <property type="entry name" value="Aminotran_5"/>
    <property type="match status" value="1"/>
</dbReference>
<dbReference type="SUPFAM" id="SSF53383">
    <property type="entry name" value="PLP-dependent transferases"/>
    <property type="match status" value="1"/>
</dbReference>